<comment type="function">
    <text evidence="1">Catalyzes the reductive methylation of 2'-deoxyuridine-5'-monophosphate (dUMP) to 2'-deoxythymidine-5'-monophosphate (dTMP) while utilizing 5,10-methylenetetrahydrofolate (mTHF) as the methyl donor and reductant in the reaction, yielding dihydrofolate (DHF) as a by-product. This enzymatic reaction provides an intracellular de novo source of dTMP, an essential precursor for DNA biosynthesis.</text>
</comment>
<comment type="catalytic activity">
    <reaction evidence="1">
        <text>dUMP + (6R)-5,10-methylene-5,6,7,8-tetrahydrofolate = 7,8-dihydrofolate + dTMP</text>
        <dbReference type="Rhea" id="RHEA:12104"/>
        <dbReference type="ChEBI" id="CHEBI:15636"/>
        <dbReference type="ChEBI" id="CHEBI:57451"/>
        <dbReference type="ChEBI" id="CHEBI:63528"/>
        <dbReference type="ChEBI" id="CHEBI:246422"/>
        <dbReference type="EC" id="2.1.1.45"/>
    </reaction>
</comment>
<comment type="pathway">
    <text evidence="1">Pyrimidine metabolism; dTTP biosynthesis.</text>
</comment>
<comment type="subunit">
    <text evidence="1">Homodimer.</text>
</comment>
<comment type="subcellular location">
    <subcellularLocation>
        <location evidence="1">Cytoplasm</location>
    </subcellularLocation>
</comment>
<comment type="similarity">
    <text evidence="1">Belongs to the thymidylate synthase family. Bacterial-type ThyA subfamily.</text>
</comment>
<organism>
    <name type="scientific">Xenorhabdus nematophila (strain ATCC 19061 / DSM 3370 / CCUG 14189 / LMG 1036 / NCIMB 9965 / AN6)</name>
    <dbReference type="NCBI Taxonomy" id="406817"/>
    <lineage>
        <taxon>Bacteria</taxon>
        <taxon>Pseudomonadati</taxon>
        <taxon>Pseudomonadota</taxon>
        <taxon>Gammaproteobacteria</taxon>
        <taxon>Enterobacterales</taxon>
        <taxon>Morganellaceae</taxon>
        <taxon>Xenorhabdus</taxon>
    </lineage>
</organism>
<sequence length="264" mass="30352">MKQYLDLMKKVLEEGTAKDDRTGTGTRSIFGHQMRFNLQEGFPLVTTKRCHLRSIIHELLWFLNGDTNIKYLHDNGVSIWDEWADENGDLGPVYGKQWRAWGSADGRHIDQLTQVLEQLKGDPDSRRIIVSAWNVGELDKMALAPCHAFFQFYVADGKLSCQLYQRSCDVFLGLPFNIASYALLVHMMAQQCNLDVGDFVWTGGDTHLYNNHLEQTHLQLSREPRALPKLVIKRKPDSLFDYRFEDFEIVDYDPYPGIKAPVAI</sequence>
<proteinExistence type="inferred from homology"/>
<evidence type="ECO:0000255" key="1">
    <source>
        <dbReference type="HAMAP-Rule" id="MF_00008"/>
    </source>
</evidence>
<name>TYSY_XENNA</name>
<feature type="chain" id="PRO_0000141048" description="Thymidylate synthase">
    <location>
        <begin position="1"/>
        <end position="264"/>
    </location>
</feature>
<feature type="active site" description="Nucleophile" evidence="1">
    <location>
        <position position="146"/>
    </location>
</feature>
<feature type="binding site" description="in other chain" evidence="1">
    <location>
        <position position="21"/>
    </location>
    <ligand>
        <name>dUMP</name>
        <dbReference type="ChEBI" id="CHEBI:246422"/>
        <note>ligand shared between dimeric partners</note>
    </ligand>
</feature>
<feature type="binding site" evidence="1">
    <location>
        <position position="51"/>
    </location>
    <ligand>
        <name>(6R)-5,10-methylene-5,6,7,8-tetrahydrofolate</name>
        <dbReference type="ChEBI" id="CHEBI:15636"/>
    </ligand>
</feature>
<feature type="binding site" evidence="1">
    <location>
        <begin position="126"/>
        <end position="127"/>
    </location>
    <ligand>
        <name>dUMP</name>
        <dbReference type="ChEBI" id="CHEBI:246422"/>
        <note>ligand shared between dimeric partners</note>
    </ligand>
</feature>
<feature type="binding site" description="in other chain" evidence="1">
    <location>
        <begin position="166"/>
        <end position="169"/>
    </location>
    <ligand>
        <name>dUMP</name>
        <dbReference type="ChEBI" id="CHEBI:246422"/>
        <note>ligand shared between dimeric partners</note>
    </ligand>
</feature>
<feature type="binding site" evidence="1">
    <location>
        <position position="169"/>
    </location>
    <ligand>
        <name>(6R)-5,10-methylene-5,6,7,8-tetrahydrofolate</name>
        <dbReference type="ChEBI" id="CHEBI:15636"/>
    </ligand>
</feature>
<feature type="binding site" description="in other chain" evidence="1">
    <location>
        <position position="177"/>
    </location>
    <ligand>
        <name>dUMP</name>
        <dbReference type="ChEBI" id="CHEBI:246422"/>
        <note>ligand shared between dimeric partners</note>
    </ligand>
</feature>
<feature type="binding site" description="in other chain" evidence="1">
    <location>
        <begin position="207"/>
        <end position="209"/>
    </location>
    <ligand>
        <name>dUMP</name>
        <dbReference type="ChEBI" id="CHEBI:246422"/>
        <note>ligand shared between dimeric partners</note>
    </ligand>
</feature>
<feature type="binding site" evidence="1">
    <location>
        <position position="263"/>
    </location>
    <ligand>
        <name>(6R)-5,10-methylene-5,6,7,8-tetrahydrofolate</name>
        <dbReference type="ChEBI" id="CHEBI:15636"/>
    </ligand>
</feature>
<gene>
    <name evidence="1" type="primary">thyA</name>
    <name type="ordered locus">XNC1_4048</name>
</gene>
<protein>
    <recommendedName>
        <fullName evidence="1">Thymidylate synthase</fullName>
        <shortName evidence="1">TS</shortName>
        <shortName evidence="1">TSase</shortName>
        <ecNumber evidence="1">2.1.1.45</ecNumber>
    </recommendedName>
</protein>
<accession>Q6REU8</accession>
<accession>D3VCN8</accession>
<keyword id="KW-0963">Cytoplasm</keyword>
<keyword id="KW-0489">Methyltransferase</keyword>
<keyword id="KW-0545">Nucleotide biosynthesis</keyword>
<keyword id="KW-1185">Reference proteome</keyword>
<keyword id="KW-0808">Transferase</keyword>
<dbReference type="EC" id="2.1.1.45" evidence="1"/>
<dbReference type="EMBL" id="AY502024">
    <property type="protein sequence ID" value="AAS80323.1"/>
    <property type="molecule type" value="Genomic_DNA"/>
</dbReference>
<dbReference type="EMBL" id="FN667742">
    <property type="protein sequence ID" value="CBJ92073.1"/>
    <property type="molecule type" value="Genomic_DNA"/>
</dbReference>
<dbReference type="RefSeq" id="WP_013185453.1">
    <property type="nucleotide sequence ID" value="NC_014228.1"/>
</dbReference>
<dbReference type="SMR" id="Q6REU8"/>
<dbReference type="STRING" id="406817.XNC1_4048"/>
<dbReference type="GeneID" id="24903230"/>
<dbReference type="KEGG" id="xne:XNC1_4048"/>
<dbReference type="eggNOG" id="COG0207">
    <property type="taxonomic scope" value="Bacteria"/>
</dbReference>
<dbReference type="HOGENOM" id="CLU_021669_0_0_6"/>
<dbReference type="UniPathway" id="UPA00575"/>
<dbReference type="Proteomes" id="UP000008075">
    <property type="component" value="Chromosome"/>
</dbReference>
<dbReference type="GO" id="GO:0005829">
    <property type="term" value="C:cytosol"/>
    <property type="evidence" value="ECO:0007669"/>
    <property type="project" value="TreeGrafter"/>
</dbReference>
<dbReference type="GO" id="GO:0004799">
    <property type="term" value="F:thymidylate synthase activity"/>
    <property type="evidence" value="ECO:0007669"/>
    <property type="project" value="UniProtKB-UniRule"/>
</dbReference>
<dbReference type="GO" id="GO:0006231">
    <property type="term" value="P:dTMP biosynthetic process"/>
    <property type="evidence" value="ECO:0007669"/>
    <property type="project" value="UniProtKB-UniRule"/>
</dbReference>
<dbReference type="GO" id="GO:0006235">
    <property type="term" value="P:dTTP biosynthetic process"/>
    <property type="evidence" value="ECO:0007669"/>
    <property type="project" value="UniProtKB-UniRule"/>
</dbReference>
<dbReference type="GO" id="GO:0032259">
    <property type="term" value="P:methylation"/>
    <property type="evidence" value="ECO:0007669"/>
    <property type="project" value="UniProtKB-KW"/>
</dbReference>
<dbReference type="CDD" id="cd00351">
    <property type="entry name" value="TS_Pyrimidine_HMase"/>
    <property type="match status" value="1"/>
</dbReference>
<dbReference type="FunFam" id="3.30.572.10:FF:000001">
    <property type="entry name" value="Thymidylate synthase"/>
    <property type="match status" value="1"/>
</dbReference>
<dbReference type="Gene3D" id="3.30.572.10">
    <property type="entry name" value="Thymidylate synthase/dCMP hydroxymethylase domain"/>
    <property type="match status" value="1"/>
</dbReference>
<dbReference type="HAMAP" id="MF_00008">
    <property type="entry name" value="Thymidy_synth_bact"/>
    <property type="match status" value="1"/>
</dbReference>
<dbReference type="InterPro" id="IPR045097">
    <property type="entry name" value="Thymidate_synth/dCMP_Mease"/>
</dbReference>
<dbReference type="InterPro" id="IPR023451">
    <property type="entry name" value="Thymidate_synth/dCMP_Mease_dom"/>
</dbReference>
<dbReference type="InterPro" id="IPR036926">
    <property type="entry name" value="Thymidate_synth/dCMP_Mease_sf"/>
</dbReference>
<dbReference type="InterPro" id="IPR000398">
    <property type="entry name" value="Thymidylate_synthase"/>
</dbReference>
<dbReference type="InterPro" id="IPR020940">
    <property type="entry name" value="Thymidylate_synthase_AS"/>
</dbReference>
<dbReference type="NCBIfam" id="NF002497">
    <property type="entry name" value="PRK01827.1-3"/>
    <property type="match status" value="1"/>
</dbReference>
<dbReference type="NCBIfam" id="NF002499">
    <property type="entry name" value="PRK01827.1-5"/>
    <property type="match status" value="1"/>
</dbReference>
<dbReference type="NCBIfam" id="TIGR03284">
    <property type="entry name" value="thym_sym"/>
    <property type="match status" value="2"/>
</dbReference>
<dbReference type="PANTHER" id="PTHR11548:SF9">
    <property type="entry name" value="THYMIDYLATE SYNTHASE"/>
    <property type="match status" value="1"/>
</dbReference>
<dbReference type="PANTHER" id="PTHR11548">
    <property type="entry name" value="THYMIDYLATE SYNTHASE 1"/>
    <property type="match status" value="1"/>
</dbReference>
<dbReference type="Pfam" id="PF00303">
    <property type="entry name" value="Thymidylat_synt"/>
    <property type="match status" value="1"/>
</dbReference>
<dbReference type="PRINTS" id="PR00108">
    <property type="entry name" value="THYMDSNTHASE"/>
</dbReference>
<dbReference type="SUPFAM" id="SSF55831">
    <property type="entry name" value="Thymidylate synthase/dCMP hydroxymethylase"/>
    <property type="match status" value="1"/>
</dbReference>
<dbReference type="PROSITE" id="PS00091">
    <property type="entry name" value="THYMIDYLATE_SYNTHASE"/>
    <property type="match status" value="1"/>
</dbReference>
<reference key="1">
    <citation type="submission" date="2003-12" db="EMBL/GenBank/DDBJ databases">
        <title>Characterization of dTMP synthesis in Xenorhabdus nematophila and evaluation of dT availability in the insect and nematode hosts.</title>
        <authorList>
            <person name="Orchard S.S."/>
            <person name="Goodrich-Blair H."/>
        </authorList>
    </citation>
    <scope>NUCLEOTIDE SEQUENCE [GENOMIC DNA]</scope>
    <source>
        <strain>ATCC 19061 / DSM 3370 / CCUG 14189 / LMG 1036 / NCIMB 9965 / AN6</strain>
    </source>
</reference>
<reference key="2">
    <citation type="journal article" date="2011" name="PLoS ONE">
        <title>The entomopathogenic bacterial endosymbionts xenorhabdus and photorhabdus: convergent lifestyles from divergent genomes.</title>
        <authorList>
            <person name="Chaston J.M."/>
            <person name="Suen G."/>
            <person name="Tucker S.L."/>
            <person name="Andersen A.W."/>
            <person name="Bhasin A."/>
            <person name="Bode E."/>
            <person name="Bode H.B."/>
            <person name="Brachmann A.O."/>
            <person name="Cowles C.E."/>
            <person name="Cowles K.N."/>
            <person name="Darby C."/>
            <person name="de Leon L."/>
            <person name="Drace K."/>
            <person name="Du Z."/>
            <person name="Givaudan A."/>
            <person name="Herbert Tran E.E."/>
            <person name="Jewell K.A."/>
            <person name="Knack J.J."/>
            <person name="Krasomil-Osterfeld K.C."/>
            <person name="Kukor R."/>
            <person name="Lanois A."/>
            <person name="Latreille P."/>
            <person name="Leimgruber N.K."/>
            <person name="Lipke C.M."/>
            <person name="Liu R."/>
            <person name="Lu X."/>
            <person name="Martens E.C."/>
            <person name="Marri P.R."/>
            <person name="Medigue C."/>
            <person name="Menard M.L."/>
            <person name="Miller N.M."/>
            <person name="Morales-Soto N."/>
            <person name="Norton S."/>
            <person name="Ogier J.C."/>
            <person name="Orchard S.S."/>
            <person name="Park D."/>
            <person name="Park Y."/>
            <person name="Qurollo B.A."/>
            <person name="Sugar D.R."/>
            <person name="Richards G.R."/>
            <person name="Rouy Z."/>
            <person name="Slominski B."/>
            <person name="Slominski K."/>
            <person name="Snyder H."/>
            <person name="Tjaden B.C."/>
            <person name="van der Hoeven R."/>
            <person name="Welch R.D."/>
            <person name="Wheeler C."/>
            <person name="Xiang B."/>
            <person name="Barbazuk B."/>
            <person name="Gaudriault S."/>
            <person name="Goodner B."/>
            <person name="Slater S.C."/>
            <person name="Forst S."/>
            <person name="Goldman B.S."/>
            <person name="Goodrich-Blair H."/>
        </authorList>
    </citation>
    <scope>NUCLEOTIDE SEQUENCE [LARGE SCALE GENOMIC DNA]</scope>
    <source>
        <strain>ATCC 19061 / DSM 3370 / CCUG 14189 / LMG 1036 / NCIMB 9965 / AN6</strain>
    </source>
</reference>